<organism>
    <name type="scientific">Lachnospira eligens (strain ATCC 27750 / DSM 3376 / VPI C15-48 / C15-B4)</name>
    <name type="common">Eubacterium eligens</name>
    <dbReference type="NCBI Taxonomy" id="515620"/>
    <lineage>
        <taxon>Bacteria</taxon>
        <taxon>Bacillati</taxon>
        <taxon>Bacillota</taxon>
        <taxon>Clostridia</taxon>
        <taxon>Lachnospirales</taxon>
        <taxon>Lachnospiraceae</taxon>
        <taxon>Lachnospira</taxon>
    </lineage>
</organism>
<feature type="chain" id="PRO_1000202178" description="UDP-N-acetylmuramate--L-alanine ligase">
    <location>
        <begin position="1"/>
        <end position="459"/>
    </location>
</feature>
<feature type="binding site" evidence="1">
    <location>
        <begin position="118"/>
        <end position="124"/>
    </location>
    <ligand>
        <name>ATP</name>
        <dbReference type="ChEBI" id="CHEBI:30616"/>
    </ligand>
</feature>
<reference key="1">
    <citation type="journal article" date="2009" name="Proc. Natl. Acad. Sci. U.S.A.">
        <title>Characterizing a model human gut microbiota composed of members of its two dominant bacterial phyla.</title>
        <authorList>
            <person name="Mahowald M.A."/>
            <person name="Rey F.E."/>
            <person name="Seedorf H."/>
            <person name="Turnbaugh P.J."/>
            <person name="Fulton R.S."/>
            <person name="Wollam A."/>
            <person name="Shah N."/>
            <person name="Wang C."/>
            <person name="Magrini V."/>
            <person name="Wilson R.K."/>
            <person name="Cantarel B.L."/>
            <person name="Coutinho P.M."/>
            <person name="Henrissat B."/>
            <person name="Crock L.W."/>
            <person name="Russell A."/>
            <person name="Verberkmoes N.C."/>
            <person name="Hettich R.L."/>
            <person name="Gordon J.I."/>
        </authorList>
    </citation>
    <scope>NUCLEOTIDE SEQUENCE [LARGE SCALE GENOMIC DNA]</scope>
    <source>
        <strain>ATCC 27750 / DSM 3376 / VPI C15-48 / C15-B4</strain>
    </source>
</reference>
<proteinExistence type="inferred from homology"/>
<protein>
    <recommendedName>
        <fullName evidence="1">UDP-N-acetylmuramate--L-alanine ligase</fullName>
        <ecNumber evidence="1">6.3.2.8</ecNumber>
    </recommendedName>
    <alternativeName>
        <fullName evidence="1">UDP-N-acetylmuramoyl-L-alanine synthetase</fullName>
    </alternativeName>
</protein>
<comment type="function">
    <text evidence="1">Cell wall formation.</text>
</comment>
<comment type="catalytic activity">
    <reaction evidence="1">
        <text>UDP-N-acetyl-alpha-D-muramate + L-alanine + ATP = UDP-N-acetyl-alpha-D-muramoyl-L-alanine + ADP + phosphate + H(+)</text>
        <dbReference type="Rhea" id="RHEA:23372"/>
        <dbReference type="ChEBI" id="CHEBI:15378"/>
        <dbReference type="ChEBI" id="CHEBI:30616"/>
        <dbReference type="ChEBI" id="CHEBI:43474"/>
        <dbReference type="ChEBI" id="CHEBI:57972"/>
        <dbReference type="ChEBI" id="CHEBI:70757"/>
        <dbReference type="ChEBI" id="CHEBI:83898"/>
        <dbReference type="ChEBI" id="CHEBI:456216"/>
        <dbReference type="EC" id="6.3.2.8"/>
    </reaction>
</comment>
<comment type="pathway">
    <text evidence="1">Cell wall biogenesis; peptidoglycan biosynthesis.</text>
</comment>
<comment type="subcellular location">
    <subcellularLocation>
        <location evidence="1">Cytoplasm</location>
    </subcellularLocation>
</comment>
<comment type="similarity">
    <text evidence="1">Belongs to the MurCDEF family.</text>
</comment>
<accession>C4Z4L9</accession>
<keyword id="KW-0067">ATP-binding</keyword>
<keyword id="KW-0131">Cell cycle</keyword>
<keyword id="KW-0132">Cell division</keyword>
<keyword id="KW-0133">Cell shape</keyword>
<keyword id="KW-0961">Cell wall biogenesis/degradation</keyword>
<keyword id="KW-0963">Cytoplasm</keyword>
<keyword id="KW-0436">Ligase</keyword>
<keyword id="KW-0547">Nucleotide-binding</keyword>
<keyword id="KW-0573">Peptidoglycan synthesis</keyword>
<keyword id="KW-1185">Reference proteome</keyword>
<name>MURC_LACE2</name>
<evidence type="ECO:0000255" key="1">
    <source>
        <dbReference type="HAMAP-Rule" id="MF_00046"/>
    </source>
</evidence>
<sequence length="459" mass="50225">MYKIDFNNPIHIHFIGIGGISMSGLAKILLSKGFSVSGSDSHSSALTDELIGDGCLVSVPQSAGNITNDIDLVVYTAAIHPDNPEFKAAKEAGLPMLTRAELLGQIMTVYKNAINIAGTHGKTTTTSMVSEILLAASMDPTISVGGILNSIGGNTRVGGDNYFVAEACEYTNSFLSFNPTMNIILNVKEDHLDFFKDIDDIRHSFKLFTEKLPSDGTLIINTDIDNYEYFYQDTDCEVITFGSDPAKSMYSASDIAYDELGRCTYSLLINGEKADTITLGVPGLHNVYNSLAAIAATRKLSVDMEHIKAGLSNFKGTNRRFEKKGTFNGVTVIDDYAHHPDEIRATLSSAAHYPHNRVWVVFQPHTYSRTKLLFNEFADALSHADKVVLAKIYAARETDTLGISSADLCEKIKSLGKECVYIDNFEDIEKYLLKNCINGDLLITMGAGDIYKVGEDLLK</sequence>
<dbReference type="EC" id="6.3.2.8" evidence="1"/>
<dbReference type="EMBL" id="CP001104">
    <property type="protein sequence ID" value="ACR72908.1"/>
    <property type="molecule type" value="Genomic_DNA"/>
</dbReference>
<dbReference type="RefSeq" id="WP_012740140.1">
    <property type="nucleotide sequence ID" value="NC_012778.1"/>
</dbReference>
<dbReference type="SMR" id="C4Z4L9"/>
<dbReference type="STRING" id="515620.EUBELI_01919"/>
<dbReference type="GeneID" id="41356566"/>
<dbReference type="KEGG" id="eel:EUBELI_01919"/>
<dbReference type="eggNOG" id="COG0773">
    <property type="taxonomic scope" value="Bacteria"/>
</dbReference>
<dbReference type="HOGENOM" id="CLU_028104_1_0_9"/>
<dbReference type="UniPathway" id="UPA00219"/>
<dbReference type="Proteomes" id="UP000001476">
    <property type="component" value="Chromosome"/>
</dbReference>
<dbReference type="GO" id="GO:0005737">
    <property type="term" value="C:cytoplasm"/>
    <property type="evidence" value="ECO:0007669"/>
    <property type="project" value="UniProtKB-SubCell"/>
</dbReference>
<dbReference type="GO" id="GO:0005524">
    <property type="term" value="F:ATP binding"/>
    <property type="evidence" value="ECO:0007669"/>
    <property type="project" value="UniProtKB-UniRule"/>
</dbReference>
<dbReference type="GO" id="GO:0008763">
    <property type="term" value="F:UDP-N-acetylmuramate-L-alanine ligase activity"/>
    <property type="evidence" value="ECO:0007669"/>
    <property type="project" value="UniProtKB-UniRule"/>
</dbReference>
<dbReference type="GO" id="GO:0051301">
    <property type="term" value="P:cell division"/>
    <property type="evidence" value="ECO:0007669"/>
    <property type="project" value="UniProtKB-KW"/>
</dbReference>
<dbReference type="GO" id="GO:0071555">
    <property type="term" value="P:cell wall organization"/>
    <property type="evidence" value="ECO:0007669"/>
    <property type="project" value="UniProtKB-KW"/>
</dbReference>
<dbReference type="GO" id="GO:0009252">
    <property type="term" value="P:peptidoglycan biosynthetic process"/>
    <property type="evidence" value="ECO:0007669"/>
    <property type="project" value="UniProtKB-UniRule"/>
</dbReference>
<dbReference type="GO" id="GO:0008360">
    <property type="term" value="P:regulation of cell shape"/>
    <property type="evidence" value="ECO:0007669"/>
    <property type="project" value="UniProtKB-KW"/>
</dbReference>
<dbReference type="Gene3D" id="3.90.190.20">
    <property type="entry name" value="Mur ligase, C-terminal domain"/>
    <property type="match status" value="1"/>
</dbReference>
<dbReference type="Gene3D" id="3.40.1190.10">
    <property type="entry name" value="Mur-like, catalytic domain"/>
    <property type="match status" value="1"/>
</dbReference>
<dbReference type="Gene3D" id="3.40.50.720">
    <property type="entry name" value="NAD(P)-binding Rossmann-like Domain"/>
    <property type="match status" value="1"/>
</dbReference>
<dbReference type="HAMAP" id="MF_00046">
    <property type="entry name" value="MurC"/>
    <property type="match status" value="1"/>
</dbReference>
<dbReference type="InterPro" id="IPR036565">
    <property type="entry name" value="Mur-like_cat_sf"/>
</dbReference>
<dbReference type="InterPro" id="IPR004101">
    <property type="entry name" value="Mur_ligase_C"/>
</dbReference>
<dbReference type="InterPro" id="IPR036615">
    <property type="entry name" value="Mur_ligase_C_dom_sf"/>
</dbReference>
<dbReference type="InterPro" id="IPR013221">
    <property type="entry name" value="Mur_ligase_cen"/>
</dbReference>
<dbReference type="InterPro" id="IPR000713">
    <property type="entry name" value="Mur_ligase_N"/>
</dbReference>
<dbReference type="InterPro" id="IPR050061">
    <property type="entry name" value="MurCDEF_pg_biosynth"/>
</dbReference>
<dbReference type="InterPro" id="IPR005758">
    <property type="entry name" value="UDP-N-AcMur_Ala_ligase_MurC"/>
</dbReference>
<dbReference type="NCBIfam" id="TIGR01082">
    <property type="entry name" value="murC"/>
    <property type="match status" value="1"/>
</dbReference>
<dbReference type="PANTHER" id="PTHR43445:SF3">
    <property type="entry name" value="UDP-N-ACETYLMURAMATE--L-ALANINE LIGASE"/>
    <property type="match status" value="1"/>
</dbReference>
<dbReference type="PANTHER" id="PTHR43445">
    <property type="entry name" value="UDP-N-ACETYLMURAMATE--L-ALANINE LIGASE-RELATED"/>
    <property type="match status" value="1"/>
</dbReference>
<dbReference type="Pfam" id="PF01225">
    <property type="entry name" value="Mur_ligase"/>
    <property type="match status" value="1"/>
</dbReference>
<dbReference type="Pfam" id="PF02875">
    <property type="entry name" value="Mur_ligase_C"/>
    <property type="match status" value="1"/>
</dbReference>
<dbReference type="Pfam" id="PF08245">
    <property type="entry name" value="Mur_ligase_M"/>
    <property type="match status" value="1"/>
</dbReference>
<dbReference type="SUPFAM" id="SSF51984">
    <property type="entry name" value="MurCD N-terminal domain"/>
    <property type="match status" value="1"/>
</dbReference>
<dbReference type="SUPFAM" id="SSF53623">
    <property type="entry name" value="MurD-like peptide ligases, catalytic domain"/>
    <property type="match status" value="1"/>
</dbReference>
<dbReference type="SUPFAM" id="SSF53244">
    <property type="entry name" value="MurD-like peptide ligases, peptide-binding domain"/>
    <property type="match status" value="1"/>
</dbReference>
<gene>
    <name evidence="1" type="primary">murC</name>
    <name type="ordered locus">EUBELI_01919</name>
</gene>